<organism>
    <name type="scientific">Mus musculus</name>
    <name type="common">Mouse</name>
    <dbReference type="NCBI Taxonomy" id="10090"/>
    <lineage>
        <taxon>Eukaryota</taxon>
        <taxon>Metazoa</taxon>
        <taxon>Chordata</taxon>
        <taxon>Craniata</taxon>
        <taxon>Vertebrata</taxon>
        <taxon>Euteleostomi</taxon>
        <taxon>Mammalia</taxon>
        <taxon>Eutheria</taxon>
        <taxon>Euarchontoglires</taxon>
        <taxon>Glires</taxon>
        <taxon>Rodentia</taxon>
        <taxon>Myomorpha</taxon>
        <taxon>Muroidea</taxon>
        <taxon>Muridae</taxon>
        <taxon>Murinae</taxon>
        <taxon>Mus</taxon>
        <taxon>Mus</taxon>
    </lineage>
</organism>
<name>HA1T_MOUSE</name>
<sequence length="384" mass="43479">MRMGTPVPGTLLILLAASQGQTQTCPGSHSLRYFYTALSRPAISEPWYIAVGYLDDTQFVRFNSSGETATYKLSAPWVEQEGPEYWARETEIVTSNAQFFRENLQTMLDYYNLSQNGSHTIQVMYGCEVEFFGSLFRAYEQHGYDGPDYIALNEDLKTWTAADTAAEITRSKWEQAGYTELRRTYLEGPCKDSLLRYLENRKKTQECTDPPKTHVTHHPRPEGYVTLRCWALRFYPADITLTWQLNGEELIQDTELVETRPAGDGTFQKWAAVVVPLGKEQKYTCHVYHEGLPEPLTLRWEPPQTSMPNRTTVRALLGAMIILGFMSGSVMMWMRKNNGGNGDDNTAAYQNEREHLSLDPRAESEALGVEAGMKDLPSAPPLVS</sequence>
<reference key="1">
    <citation type="journal article" date="1985" name="J. Exp. Med.">
        <title>Structure of a gene encoding a murine thymus leukemia antigen, and organization of Tla genes in the BALB/c mouse.</title>
        <authorList>
            <person name="Fisher D.A."/>
            <person name="Hunt S.W. III"/>
            <person name="Hood L.E."/>
        </authorList>
    </citation>
    <scope>NUCLEOTIDE SEQUENCE [GENOMIC DNA]</scope>
    <source>
        <strain>BALB/cJ</strain>
    </source>
</reference>
<reference key="2">
    <citation type="journal article" date="1986" name="Proc. Natl. Acad. Sci. U.S.A.">
        <title>Conservation and diversity in the class I genes of the major histocompatibility complex: sequence analysis of a Tlab gene and comparison with a Tlac gene.</title>
        <authorList>
            <person name="Pontarotti P.A."/>
            <person name="Mashimo H."/>
            <person name="Zeff R.A."/>
            <person name="Fisher D.A."/>
            <person name="Hood L."/>
            <person name="Mellor A."/>
            <person name="Flavell R.A."/>
            <person name="Nathenson S.G."/>
        </authorList>
    </citation>
    <scope>NUCLEOTIDE SEQUENCE [GENOMIC DNA]</scope>
</reference>
<reference key="3">
    <citation type="journal article" date="1992" name="Immunogenetics">
        <title>Nucleotide sequence of the BALB/c H-2T region gene, T3d.</title>
        <authorList>
            <person name="Mashimo H."/>
            <person name="Chorney M.J."/>
            <person name="Pontarotti P."/>
            <person name="Fisher D.A."/>
            <person name="Hood L."/>
            <person name="Nathenson S.G."/>
        </authorList>
    </citation>
    <scope>NUCLEOTIDE SEQUENCE [GENOMIC DNA]</scope>
</reference>
<reference key="4">
    <citation type="journal article" date="1985" name="Proc. Natl. Acad. Sci. U.S.A.">
        <title>Structural analysis of TL genes of the mouse.</title>
        <authorList>
            <person name="Obata Y."/>
            <person name="Chen Y.-T."/>
            <person name="Stockert E."/>
            <person name="Old L.J."/>
        </authorList>
    </citation>
    <scope>NUCLEOTIDE SEQUENCE [GENOMIC DNA] OF 13-384</scope>
</reference>
<evidence type="ECO:0000255" key="1"/>
<evidence type="ECO:0000255" key="2">
    <source>
        <dbReference type="PROSITE-ProRule" id="PRU00114"/>
    </source>
</evidence>
<evidence type="ECO:0000256" key="3">
    <source>
        <dbReference type="SAM" id="MobiDB-lite"/>
    </source>
</evidence>
<evidence type="ECO:0000305" key="4"/>
<evidence type="ECO:0007829" key="5">
    <source>
        <dbReference type="PDB" id="1NEZ"/>
    </source>
</evidence>
<dbReference type="EMBL" id="X02817">
    <property type="protein sequence ID" value="CAA26586.1"/>
    <property type="status" value="ALT_FRAME"/>
    <property type="molecule type" value="Genomic_DNA"/>
</dbReference>
<dbReference type="EMBL" id="M13285">
    <property type="protein sequence ID" value="AAA39687.1"/>
    <property type="molecule type" value="Genomic_DNA"/>
</dbReference>
<dbReference type="EMBL" id="M75875">
    <property type="protein sequence ID" value="AAA39658.1"/>
    <property type="molecule type" value="Genomic_DNA"/>
</dbReference>
<dbReference type="EMBL" id="M11741">
    <property type="protein sequence ID" value="AAA39692.1"/>
    <property type="molecule type" value="Genomic_DNA"/>
</dbReference>
<dbReference type="EMBL" id="M11742">
    <property type="protein sequence ID" value="AAA39692.1"/>
    <property type="status" value="JOINED"/>
    <property type="molecule type" value="Genomic_DNA"/>
</dbReference>
<dbReference type="CCDS" id="CCDS28718.1"/>
<dbReference type="PIR" id="A25132">
    <property type="entry name" value="A25132"/>
</dbReference>
<dbReference type="PIR" id="A25148">
    <property type="entry name" value="A25148"/>
</dbReference>
<dbReference type="PIR" id="I48851">
    <property type="entry name" value="I48851"/>
</dbReference>
<dbReference type="PIR" id="I54499">
    <property type="entry name" value="I54499"/>
</dbReference>
<dbReference type="PDB" id="1NEZ">
    <property type="method" value="X-ray"/>
    <property type="resolution" value="2.10 A"/>
    <property type="chains" value="A=27-300"/>
</dbReference>
<dbReference type="PDBsum" id="1NEZ"/>
<dbReference type="SMR" id="P14432"/>
<dbReference type="FunCoup" id="P14432">
    <property type="interactions" value="48"/>
</dbReference>
<dbReference type="STRING" id="10090.ENSMUSP00000099736"/>
<dbReference type="GlyCosmos" id="P14432">
    <property type="glycosylation" value="4 sites, No reported glycans"/>
</dbReference>
<dbReference type="GlyGen" id="P14432">
    <property type="glycosylation" value="4 sites"/>
</dbReference>
<dbReference type="jPOST" id="P14432"/>
<dbReference type="PaxDb" id="10090-ENSMUSP00000099736"/>
<dbReference type="PeptideAtlas" id="P14432"/>
<dbReference type="ProteomicsDB" id="271383"/>
<dbReference type="AGR" id="MGI:95959"/>
<dbReference type="MGI" id="MGI:95959">
    <property type="gene designation" value="H2-T3"/>
</dbReference>
<dbReference type="eggNOG" id="ENOG502RQEK">
    <property type="taxonomic scope" value="Eukaryota"/>
</dbReference>
<dbReference type="InParanoid" id="P14432"/>
<dbReference type="OrthoDB" id="8936120at2759"/>
<dbReference type="PhylomeDB" id="P14432"/>
<dbReference type="Reactome" id="R-MMU-1236974">
    <property type="pathway name" value="ER-Phagosome pathway"/>
</dbReference>
<dbReference type="Reactome" id="R-MMU-1236977">
    <property type="pathway name" value="Endosomal/Vacuolar pathway"/>
</dbReference>
<dbReference type="Reactome" id="R-MMU-198933">
    <property type="pathway name" value="Immunoregulatory interactions between a Lymphoid and a non-Lymphoid cell"/>
</dbReference>
<dbReference type="Reactome" id="R-MMU-2172127">
    <property type="pathway name" value="DAP12 interactions"/>
</dbReference>
<dbReference type="Reactome" id="R-MMU-6798695">
    <property type="pathway name" value="Neutrophil degranulation"/>
</dbReference>
<dbReference type="Reactome" id="R-MMU-983170">
    <property type="pathway name" value="Antigen Presentation: Folding, assembly and peptide loading of class I MHC"/>
</dbReference>
<dbReference type="EvolutionaryTrace" id="P14432"/>
<dbReference type="PRO" id="PR:P14432"/>
<dbReference type="Proteomes" id="UP000000589">
    <property type="component" value="Unplaced"/>
</dbReference>
<dbReference type="RNAct" id="P14432">
    <property type="molecule type" value="protein"/>
</dbReference>
<dbReference type="GO" id="GO:0098553">
    <property type="term" value="C:lumenal side of endoplasmic reticulum membrane"/>
    <property type="evidence" value="ECO:0000304"/>
    <property type="project" value="Reactome"/>
</dbReference>
<dbReference type="GO" id="GO:0042612">
    <property type="term" value="C:MHC class I protein complex"/>
    <property type="evidence" value="ECO:0007669"/>
    <property type="project" value="UniProtKB-KW"/>
</dbReference>
<dbReference type="GO" id="GO:0030670">
    <property type="term" value="C:phagocytic vesicle membrane"/>
    <property type="evidence" value="ECO:0000304"/>
    <property type="project" value="Reactome"/>
</dbReference>
<dbReference type="GO" id="GO:0002474">
    <property type="term" value="P:antigen processing and presentation of peptide antigen via MHC class I"/>
    <property type="evidence" value="ECO:0007669"/>
    <property type="project" value="UniProtKB-KW"/>
</dbReference>
<dbReference type="CDD" id="cd21012">
    <property type="entry name" value="IgC1_MHC_H-2_TLA"/>
    <property type="match status" value="1"/>
</dbReference>
<dbReference type="FunFam" id="2.60.40.10:FF:000014">
    <property type="entry name" value="H-2 class I histocompatibility antigen, alpha chain"/>
    <property type="match status" value="1"/>
</dbReference>
<dbReference type="FunFam" id="3.30.500.10:FF:000001">
    <property type="entry name" value="H-2 class I histocompatibility antigen, alpha chain"/>
    <property type="match status" value="1"/>
</dbReference>
<dbReference type="Gene3D" id="2.60.40.10">
    <property type="entry name" value="Immunoglobulins"/>
    <property type="match status" value="1"/>
</dbReference>
<dbReference type="Gene3D" id="3.30.500.10">
    <property type="entry name" value="MHC class I-like antigen recognition-like"/>
    <property type="match status" value="1"/>
</dbReference>
<dbReference type="InterPro" id="IPR007110">
    <property type="entry name" value="Ig-like_dom"/>
</dbReference>
<dbReference type="InterPro" id="IPR036179">
    <property type="entry name" value="Ig-like_dom_sf"/>
</dbReference>
<dbReference type="InterPro" id="IPR013783">
    <property type="entry name" value="Ig-like_fold"/>
</dbReference>
<dbReference type="InterPro" id="IPR003006">
    <property type="entry name" value="Ig/MHC_CS"/>
</dbReference>
<dbReference type="InterPro" id="IPR003597">
    <property type="entry name" value="Ig_C1-set"/>
</dbReference>
<dbReference type="InterPro" id="IPR050208">
    <property type="entry name" value="MHC_class-I_related"/>
</dbReference>
<dbReference type="InterPro" id="IPR011161">
    <property type="entry name" value="MHC_I-like_Ag-recog"/>
</dbReference>
<dbReference type="InterPro" id="IPR037055">
    <property type="entry name" value="MHC_I-like_Ag-recog_sf"/>
</dbReference>
<dbReference type="InterPro" id="IPR011162">
    <property type="entry name" value="MHC_I/II-like_Ag-recog"/>
</dbReference>
<dbReference type="InterPro" id="IPR001039">
    <property type="entry name" value="MHC_I_a_a1/a2"/>
</dbReference>
<dbReference type="PANTHER" id="PTHR16675:SF243">
    <property type="entry name" value="H-2 CLASS I HISTOCOMPATIBILITY ANTIGEN, TLA(B) ALPHA CHAIN-RELATED"/>
    <property type="match status" value="1"/>
</dbReference>
<dbReference type="PANTHER" id="PTHR16675">
    <property type="entry name" value="MHC CLASS I-RELATED"/>
    <property type="match status" value="1"/>
</dbReference>
<dbReference type="Pfam" id="PF07654">
    <property type="entry name" value="C1-set"/>
    <property type="match status" value="1"/>
</dbReference>
<dbReference type="Pfam" id="PF00129">
    <property type="entry name" value="MHC_I"/>
    <property type="match status" value="1"/>
</dbReference>
<dbReference type="PRINTS" id="PR01638">
    <property type="entry name" value="MHCCLASSI"/>
</dbReference>
<dbReference type="SMART" id="SM00407">
    <property type="entry name" value="IGc1"/>
    <property type="match status" value="1"/>
</dbReference>
<dbReference type="SUPFAM" id="SSF48726">
    <property type="entry name" value="Immunoglobulin"/>
    <property type="match status" value="1"/>
</dbReference>
<dbReference type="SUPFAM" id="SSF54452">
    <property type="entry name" value="MHC antigen-recognition domain"/>
    <property type="match status" value="1"/>
</dbReference>
<dbReference type="PROSITE" id="PS50835">
    <property type="entry name" value="IG_LIKE"/>
    <property type="match status" value="1"/>
</dbReference>
<dbReference type="PROSITE" id="PS00290">
    <property type="entry name" value="IG_MHC"/>
    <property type="match status" value="1"/>
</dbReference>
<protein>
    <recommendedName>
        <fullName>H-2 class I histocompatibility antigen, TLA(B) alpha chain</fullName>
    </recommendedName>
    <alternativeName>
        <fullName>MHC thymus leukemia antigen</fullName>
    </alternativeName>
</protein>
<keyword id="KW-0002">3D-structure</keyword>
<keyword id="KW-1015">Disulfide bond</keyword>
<keyword id="KW-0325">Glycoprotein</keyword>
<keyword id="KW-0391">Immunity</keyword>
<keyword id="KW-0472">Membrane</keyword>
<keyword id="KW-0490">MHC I</keyword>
<keyword id="KW-1185">Reference proteome</keyword>
<keyword id="KW-0732">Signal</keyword>
<keyword id="KW-0812">Transmembrane</keyword>
<keyword id="KW-1133">Transmembrane helix</keyword>
<comment type="function">
    <text>Involved in the presentation of foreign antigens to the immune system.</text>
</comment>
<comment type="subunit">
    <text>Heterodimer of an alpha chain and a beta chain (beta-2-microglobulin).</text>
</comment>
<comment type="subcellular location">
    <subcellularLocation>
        <location>Membrane</location>
        <topology>Single-pass type I membrane protein</topology>
    </subcellularLocation>
</comment>
<comment type="tissue specificity">
    <text>TL antigens are only expressed on thymocytes, activated T-lymphocytes and on some thymic leukemias.</text>
</comment>
<comment type="similarity">
    <text evidence="4">Belongs to the MHC class I family.</text>
</comment>
<comment type="sequence caution" evidence="4">
    <conflict type="frameshift">
        <sequence resource="EMBL-CDS" id="CAA26586"/>
    </conflict>
</comment>
<feature type="signal peptide" evidence="1">
    <location>
        <begin position="1"/>
        <end position="26"/>
    </location>
</feature>
<feature type="chain" id="PRO_0000018937" description="H-2 class I histocompatibility antigen, TLA(B) alpha chain">
    <location>
        <begin position="27"/>
        <end position="384"/>
    </location>
</feature>
<feature type="topological domain" description="Extracellular" evidence="1">
    <location>
        <begin position="27"/>
        <end position="314"/>
    </location>
</feature>
<feature type="transmembrane region" description="Helical" evidence="1">
    <location>
        <begin position="315"/>
        <end position="334"/>
    </location>
</feature>
<feature type="topological domain" description="Cytoplasmic" evidence="1">
    <location>
        <begin position="335"/>
        <end position="384"/>
    </location>
</feature>
<feature type="domain" description="Ig-like C1-type">
    <location>
        <begin position="211"/>
        <end position="299"/>
    </location>
</feature>
<feature type="region of interest" description="Alpha-1">
    <location>
        <begin position="27"/>
        <end position="116"/>
    </location>
</feature>
<feature type="region of interest" description="Alpha-2">
    <location>
        <begin position="117"/>
        <end position="208"/>
    </location>
</feature>
<feature type="region of interest" description="Alpha-3">
    <location>
        <begin position="209"/>
        <end position="300"/>
    </location>
</feature>
<feature type="region of interest" description="Connecting peptide">
    <location>
        <begin position="301"/>
        <end position="314"/>
    </location>
</feature>
<feature type="region of interest" description="Disordered" evidence="3">
    <location>
        <begin position="354"/>
        <end position="384"/>
    </location>
</feature>
<feature type="compositionally biased region" description="Basic and acidic residues" evidence="3">
    <location>
        <begin position="354"/>
        <end position="364"/>
    </location>
</feature>
<feature type="glycosylation site" description="N-linked (GlcNAc...) asparagine" evidence="1">
    <location>
        <position position="63"/>
    </location>
</feature>
<feature type="glycosylation site" description="N-linked (GlcNAc...) asparagine" evidence="1">
    <location>
        <position position="112"/>
    </location>
</feature>
<feature type="glycosylation site" description="N-linked (GlcNAc...) asparagine" evidence="1">
    <location>
        <position position="116"/>
    </location>
</feature>
<feature type="glycosylation site" description="N-linked (GlcNAc...) asparagine" evidence="1">
    <location>
        <position position="309"/>
    </location>
</feature>
<feature type="disulfide bond" evidence="2">
    <location>
        <begin position="127"/>
        <end position="190"/>
    </location>
</feature>
<feature type="disulfide bond" evidence="2">
    <location>
        <begin position="229"/>
        <end position="285"/>
    </location>
</feature>
<feature type="sequence variant" description="In haplotype T3B.">
    <original>P</original>
    <variation>R</variation>
    <location>
        <position position="147"/>
    </location>
</feature>
<feature type="sequence variant" description="In haplotype T3B.">
    <original>E</original>
    <variation>D</variation>
    <location>
        <position position="365"/>
    </location>
</feature>
<feature type="sequence variant" description="In haplotype T3B.">
    <original>P</original>
    <variation>H</variation>
    <location>
        <position position="381"/>
    </location>
</feature>
<feature type="sequence conflict" description="In Ref. 1; CAA26586." evidence="4" ref="1">
    <original>P</original>
    <variation>Q</variation>
    <location>
        <position position="6"/>
    </location>
</feature>
<feature type="sequence conflict" description="In Ref. 1; CAA26586." evidence="4" ref="1">
    <original>G</original>
    <variation>S</variation>
    <location>
        <position position="9"/>
    </location>
</feature>
<feature type="sequence conflict" description="In Ref. 1; CAA26586." evidence="4" ref="1">
    <original>G</original>
    <variation>V</variation>
    <location>
        <position position="20"/>
    </location>
</feature>
<feature type="sequence conflict" description="In Ref. 1; CAA26586." evidence="4" ref="1">
    <original>V</original>
    <variation>A</variation>
    <location>
        <position position="60"/>
    </location>
</feature>
<feature type="sequence conflict" description="In Ref. 1; CAA26586." evidence="4" ref="1">
    <original>N</original>
    <variation>D</variation>
    <location>
        <position position="63"/>
    </location>
</feature>
<feature type="sequence conflict" description="In Ref. 1; CAA26586." evidence="4" ref="1">
    <original>S</original>
    <variation>A</variation>
    <location>
        <position position="65"/>
    </location>
</feature>
<feature type="sequence conflict" description="In Ref. 1; CAA26586." evidence="4" ref="1">
    <original>A</original>
    <variation>G</variation>
    <location>
        <position position="69"/>
    </location>
</feature>
<feature type="sequence conflict" description="In Ref. 1; CAA26586." evidence="4" ref="1">
    <original>P</original>
    <variation>Q</variation>
    <location>
        <position position="147"/>
    </location>
</feature>
<feature type="sequence conflict" description="In Ref. 1; CAA26586." evidence="4" ref="1">
    <original>T</original>
    <variation>M</variation>
    <location>
        <position position="164"/>
    </location>
</feature>
<feature type="sequence conflict" description="In Ref. 1; CAA26586." evidence="4" ref="1">
    <original>P</original>
    <variation>A</variation>
    <location>
        <position position="219"/>
    </location>
</feature>
<feature type="sequence conflict" description="In Ref. 1; CAA26586." evidence="4" ref="1">
    <original>Y</original>
    <variation>D</variation>
    <location>
        <position position="224"/>
    </location>
</feature>
<feature type="sequence conflict" description="In Ref. 1; CAA26586." evidence="4" ref="1">
    <original>R</original>
    <variation>G</variation>
    <location>
        <position position="233"/>
    </location>
</feature>
<feature type="sequence conflict" description="In Ref. 1; CAA26586." evidence="4" ref="1">
    <original>D</original>
    <variation>H</variation>
    <location>
        <position position="238"/>
    </location>
</feature>
<feature type="sequence conflict" description="In Ref. 1; CAA26586." evidence="4" ref="1">
    <original>L</original>
    <variation>S</variation>
    <location>
        <position position="277"/>
    </location>
</feature>
<feature type="sequence conflict" description="In Ref. 1; CAA26586." evidence="4" ref="1">
    <original>K</original>
    <variation>E</variation>
    <location>
        <position position="279"/>
    </location>
</feature>
<feature type="sequence conflict" description="In Ref. 4; AAA39692." evidence="4" ref="4">
    <original>P</original>
    <variation>L</variation>
    <location>
        <position position="302"/>
    </location>
</feature>
<feature type="sequence conflict" description="In Ref. 1; CAA26586." evidence="4" ref="1">
    <original>T</original>
    <variation>S</variation>
    <location>
        <position position="305"/>
    </location>
</feature>
<feature type="sequence conflict" description="In Ref. 4; AAA39692." evidence="4" ref="4">
    <original>D</original>
    <variation>T</variation>
    <location>
        <position position="359"/>
    </location>
</feature>
<feature type="strand" evidence="5">
    <location>
        <begin position="28"/>
        <end position="39"/>
    </location>
</feature>
<feature type="strand" evidence="5">
    <location>
        <begin position="48"/>
        <end position="54"/>
    </location>
</feature>
<feature type="strand" evidence="5">
    <location>
        <begin position="57"/>
        <end position="64"/>
    </location>
</feature>
<feature type="turn" evidence="5">
    <location>
        <begin position="65"/>
        <end position="68"/>
    </location>
</feature>
<feature type="strand" evidence="5">
    <location>
        <begin position="70"/>
        <end position="73"/>
    </location>
</feature>
<feature type="helix" evidence="5">
    <location>
        <begin position="76"/>
        <end position="79"/>
    </location>
</feature>
<feature type="helix" evidence="5">
    <location>
        <begin position="83"/>
        <end position="102"/>
    </location>
</feature>
<feature type="helix" evidence="5">
    <location>
        <begin position="104"/>
        <end position="110"/>
    </location>
</feature>
<feature type="strand" evidence="5">
    <location>
        <begin position="115"/>
        <end position="117"/>
    </location>
</feature>
<feature type="strand" evidence="5">
    <location>
        <begin position="119"/>
        <end position="130"/>
    </location>
</feature>
<feature type="turn" evidence="5">
    <location>
        <begin position="131"/>
        <end position="134"/>
    </location>
</feature>
<feature type="strand" evidence="5">
    <location>
        <begin position="135"/>
        <end position="144"/>
    </location>
</feature>
<feature type="strand" evidence="5">
    <location>
        <begin position="147"/>
        <end position="152"/>
    </location>
</feature>
<feature type="strand" evidence="5">
    <location>
        <begin position="159"/>
        <end position="163"/>
    </location>
</feature>
<feature type="helix" evidence="5">
    <location>
        <begin position="164"/>
        <end position="175"/>
    </location>
</feature>
<feature type="helix" evidence="5">
    <location>
        <begin position="178"/>
        <end position="187"/>
    </location>
</feature>
<feature type="helix" evidence="5">
    <location>
        <begin position="189"/>
        <end position="204"/>
    </location>
</feature>
<feature type="strand" evidence="5">
    <location>
        <begin position="212"/>
        <end position="219"/>
    </location>
</feature>
<feature type="strand" evidence="5">
    <location>
        <begin position="223"/>
        <end position="237"/>
    </location>
</feature>
<feature type="strand" evidence="5">
    <location>
        <begin position="240"/>
        <end position="245"/>
    </location>
</feature>
<feature type="strand" evidence="5">
    <location>
        <begin position="253"/>
        <end position="256"/>
    </location>
</feature>
<feature type="strand" evidence="5">
    <location>
        <begin position="263"/>
        <end position="265"/>
    </location>
</feature>
<feature type="strand" evidence="5">
    <location>
        <begin position="267"/>
        <end position="275"/>
    </location>
</feature>
<feature type="helix" evidence="5">
    <location>
        <begin position="280"/>
        <end position="282"/>
    </location>
</feature>
<feature type="strand" evidence="5">
    <location>
        <begin position="283"/>
        <end position="288"/>
    </location>
</feature>
<feature type="strand" evidence="5">
    <location>
        <begin position="292"/>
        <end position="294"/>
    </location>
</feature>
<feature type="strand" evidence="5">
    <location>
        <begin position="296"/>
        <end position="299"/>
    </location>
</feature>
<accession>P14432</accession>
<accession>P14433</accession>
<accession>Q31194</accession>
<accession>Q31203</accession>
<gene>
    <name type="primary">H2-T3</name>
</gene>
<proteinExistence type="evidence at protein level"/>